<gene>
    <name evidence="1" type="primary">rpsQ</name>
    <name type="ordered locus">UU240</name>
</gene>
<feature type="chain" id="PRO_0000233602" description="Small ribosomal subunit protein uS17">
    <location>
        <begin position="1"/>
        <end position="84"/>
    </location>
</feature>
<reference key="1">
    <citation type="journal article" date="2000" name="Nature">
        <title>The complete sequence of the mucosal pathogen Ureaplasma urealyticum.</title>
        <authorList>
            <person name="Glass J.I."/>
            <person name="Lefkowitz E.J."/>
            <person name="Glass J.S."/>
            <person name="Heiner C.R."/>
            <person name="Chen E.Y."/>
            <person name="Cassell G.H."/>
        </authorList>
    </citation>
    <scope>NUCLEOTIDE SEQUENCE [LARGE SCALE GENOMIC DNA]</scope>
    <source>
        <strain>ATCC 700970</strain>
    </source>
</reference>
<evidence type="ECO:0000255" key="1">
    <source>
        <dbReference type="HAMAP-Rule" id="MF_01345"/>
    </source>
</evidence>
<evidence type="ECO:0000305" key="2"/>
<keyword id="KW-1185">Reference proteome</keyword>
<keyword id="KW-0687">Ribonucleoprotein</keyword>
<keyword id="KW-0689">Ribosomal protein</keyword>
<keyword id="KW-0694">RNA-binding</keyword>
<keyword id="KW-0699">rRNA-binding</keyword>
<sequence>MERSRRKVLEGLVVSDKMQKTVVVSVETKSKHPIYRKLVISHKKYHAHNDNDDAKVGDLVEITETRPLSATKNWRVSKILERAR</sequence>
<accession>Q9PQQ1</accession>
<comment type="function">
    <text evidence="1">One of the primary rRNA binding proteins, it binds specifically to the 5'-end of 16S ribosomal RNA.</text>
</comment>
<comment type="subunit">
    <text evidence="1">Part of the 30S ribosomal subunit.</text>
</comment>
<comment type="similarity">
    <text evidence="1">Belongs to the universal ribosomal protein uS17 family.</text>
</comment>
<name>RS17_UREPA</name>
<dbReference type="EMBL" id="AF222894">
    <property type="protein sequence ID" value="AAF30649.1"/>
    <property type="molecule type" value="Genomic_DNA"/>
</dbReference>
<dbReference type="RefSeq" id="WP_004025503.1">
    <property type="nucleotide sequence ID" value="NC_002162.1"/>
</dbReference>
<dbReference type="SMR" id="Q9PQQ1"/>
<dbReference type="STRING" id="273119.UU240"/>
<dbReference type="EnsemblBacteria" id="AAF30649">
    <property type="protein sequence ID" value="AAF30649"/>
    <property type="gene ID" value="UU240"/>
</dbReference>
<dbReference type="GeneID" id="93848715"/>
<dbReference type="KEGG" id="uur:UU240"/>
<dbReference type="eggNOG" id="COG0186">
    <property type="taxonomic scope" value="Bacteria"/>
</dbReference>
<dbReference type="HOGENOM" id="CLU_073626_1_0_14"/>
<dbReference type="OrthoDB" id="9811714at2"/>
<dbReference type="Proteomes" id="UP000000423">
    <property type="component" value="Chromosome"/>
</dbReference>
<dbReference type="GO" id="GO:0022627">
    <property type="term" value="C:cytosolic small ribosomal subunit"/>
    <property type="evidence" value="ECO:0007669"/>
    <property type="project" value="TreeGrafter"/>
</dbReference>
<dbReference type="GO" id="GO:0019843">
    <property type="term" value="F:rRNA binding"/>
    <property type="evidence" value="ECO:0007669"/>
    <property type="project" value="UniProtKB-UniRule"/>
</dbReference>
<dbReference type="GO" id="GO:0003735">
    <property type="term" value="F:structural constituent of ribosome"/>
    <property type="evidence" value="ECO:0007669"/>
    <property type="project" value="InterPro"/>
</dbReference>
<dbReference type="GO" id="GO:0006412">
    <property type="term" value="P:translation"/>
    <property type="evidence" value="ECO:0007669"/>
    <property type="project" value="UniProtKB-UniRule"/>
</dbReference>
<dbReference type="CDD" id="cd00364">
    <property type="entry name" value="Ribosomal_uS17"/>
    <property type="match status" value="1"/>
</dbReference>
<dbReference type="Gene3D" id="2.40.50.140">
    <property type="entry name" value="Nucleic acid-binding proteins"/>
    <property type="match status" value="1"/>
</dbReference>
<dbReference type="HAMAP" id="MF_01345_B">
    <property type="entry name" value="Ribosomal_uS17_B"/>
    <property type="match status" value="1"/>
</dbReference>
<dbReference type="InterPro" id="IPR012340">
    <property type="entry name" value="NA-bd_OB-fold"/>
</dbReference>
<dbReference type="InterPro" id="IPR000266">
    <property type="entry name" value="Ribosomal_uS17"/>
</dbReference>
<dbReference type="InterPro" id="IPR019984">
    <property type="entry name" value="Ribosomal_uS17_bact/chlr"/>
</dbReference>
<dbReference type="InterPro" id="IPR019979">
    <property type="entry name" value="Ribosomal_uS17_CS"/>
</dbReference>
<dbReference type="NCBIfam" id="NF004123">
    <property type="entry name" value="PRK05610.1"/>
    <property type="match status" value="1"/>
</dbReference>
<dbReference type="NCBIfam" id="TIGR03635">
    <property type="entry name" value="uS17_bact"/>
    <property type="match status" value="1"/>
</dbReference>
<dbReference type="PANTHER" id="PTHR10744">
    <property type="entry name" value="40S RIBOSOMAL PROTEIN S11 FAMILY MEMBER"/>
    <property type="match status" value="1"/>
</dbReference>
<dbReference type="PANTHER" id="PTHR10744:SF1">
    <property type="entry name" value="SMALL RIBOSOMAL SUBUNIT PROTEIN US17M"/>
    <property type="match status" value="1"/>
</dbReference>
<dbReference type="Pfam" id="PF00366">
    <property type="entry name" value="Ribosomal_S17"/>
    <property type="match status" value="1"/>
</dbReference>
<dbReference type="PRINTS" id="PR00973">
    <property type="entry name" value="RIBOSOMALS17"/>
</dbReference>
<dbReference type="SUPFAM" id="SSF50249">
    <property type="entry name" value="Nucleic acid-binding proteins"/>
    <property type="match status" value="1"/>
</dbReference>
<dbReference type="PROSITE" id="PS00056">
    <property type="entry name" value="RIBOSOMAL_S17"/>
    <property type="match status" value="1"/>
</dbReference>
<organism>
    <name type="scientific">Ureaplasma parvum serovar 3 (strain ATCC 700970)</name>
    <dbReference type="NCBI Taxonomy" id="273119"/>
    <lineage>
        <taxon>Bacteria</taxon>
        <taxon>Bacillati</taxon>
        <taxon>Mycoplasmatota</taxon>
        <taxon>Mycoplasmoidales</taxon>
        <taxon>Mycoplasmoidaceae</taxon>
        <taxon>Ureaplasma</taxon>
    </lineage>
</organism>
<protein>
    <recommendedName>
        <fullName evidence="1">Small ribosomal subunit protein uS17</fullName>
    </recommendedName>
    <alternativeName>
        <fullName evidence="2">30S ribosomal protein S17</fullName>
    </alternativeName>
</protein>
<proteinExistence type="inferred from homology"/>